<sequence>MQRFTDFYAAMHGGSSVTPTGLGYIPMVIEQSGRGERAYDIYSRLLRERLIFLVGPVNDNTANLVVAQLLFLESENPDKDISFYINSPGGSVYAGMAIYDTMQFIKPDVSTLCTGLAASMGAFLLAAGKKGKRFTLPNSRIMIHQPSGGAQGQASDIQIQAREILDLRERLNRILAENTGQPVERIAVDTERDNFMSAEDAVSYGLVDKVLTSRAQT</sequence>
<dbReference type="EC" id="3.4.21.92" evidence="1"/>
<dbReference type="EMBL" id="BX640416">
    <property type="protein sequence ID" value="CAE42062.1"/>
    <property type="molecule type" value="Genomic_DNA"/>
</dbReference>
<dbReference type="RefSeq" id="NP_880486.1">
    <property type="nucleotide sequence ID" value="NC_002929.2"/>
</dbReference>
<dbReference type="RefSeq" id="WP_003812508.1">
    <property type="nucleotide sequence ID" value="NZ_CP039022.1"/>
</dbReference>
<dbReference type="SMR" id="Q7VXI7"/>
<dbReference type="STRING" id="257313.BP1775"/>
<dbReference type="MEROPS" id="S14.001"/>
<dbReference type="PaxDb" id="257313-BP1775"/>
<dbReference type="GeneID" id="93203780"/>
<dbReference type="KEGG" id="bpe:BP1775"/>
<dbReference type="PATRIC" id="fig|257313.5.peg.1905"/>
<dbReference type="eggNOG" id="COG0740">
    <property type="taxonomic scope" value="Bacteria"/>
</dbReference>
<dbReference type="HOGENOM" id="CLU_058707_3_2_4"/>
<dbReference type="Proteomes" id="UP000002676">
    <property type="component" value="Chromosome"/>
</dbReference>
<dbReference type="GO" id="GO:0005737">
    <property type="term" value="C:cytoplasm"/>
    <property type="evidence" value="ECO:0007669"/>
    <property type="project" value="UniProtKB-SubCell"/>
</dbReference>
<dbReference type="GO" id="GO:0009368">
    <property type="term" value="C:endopeptidase Clp complex"/>
    <property type="evidence" value="ECO:0007669"/>
    <property type="project" value="TreeGrafter"/>
</dbReference>
<dbReference type="GO" id="GO:0004176">
    <property type="term" value="F:ATP-dependent peptidase activity"/>
    <property type="evidence" value="ECO:0007669"/>
    <property type="project" value="InterPro"/>
</dbReference>
<dbReference type="GO" id="GO:0051117">
    <property type="term" value="F:ATPase binding"/>
    <property type="evidence" value="ECO:0007669"/>
    <property type="project" value="TreeGrafter"/>
</dbReference>
<dbReference type="GO" id="GO:0004252">
    <property type="term" value="F:serine-type endopeptidase activity"/>
    <property type="evidence" value="ECO:0007669"/>
    <property type="project" value="UniProtKB-UniRule"/>
</dbReference>
<dbReference type="GO" id="GO:0006515">
    <property type="term" value="P:protein quality control for misfolded or incompletely synthesized proteins"/>
    <property type="evidence" value="ECO:0007669"/>
    <property type="project" value="TreeGrafter"/>
</dbReference>
<dbReference type="CDD" id="cd07017">
    <property type="entry name" value="S14_ClpP_2"/>
    <property type="match status" value="1"/>
</dbReference>
<dbReference type="FunFam" id="3.90.226.10:FF:000001">
    <property type="entry name" value="ATP-dependent Clp protease proteolytic subunit"/>
    <property type="match status" value="1"/>
</dbReference>
<dbReference type="Gene3D" id="3.90.226.10">
    <property type="entry name" value="2-enoyl-CoA Hydratase, Chain A, domain 1"/>
    <property type="match status" value="1"/>
</dbReference>
<dbReference type="HAMAP" id="MF_00444">
    <property type="entry name" value="ClpP"/>
    <property type="match status" value="1"/>
</dbReference>
<dbReference type="InterPro" id="IPR001907">
    <property type="entry name" value="ClpP"/>
</dbReference>
<dbReference type="InterPro" id="IPR029045">
    <property type="entry name" value="ClpP/crotonase-like_dom_sf"/>
</dbReference>
<dbReference type="InterPro" id="IPR023562">
    <property type="entry name" value="ClpP/TepA"/>
</dbReference>
<dbReference type="InterPro" id="IPR033135">
    <property type="entry name" value="ClpP_His_AS"/>
</dbReference>
<dbReference type="NCBIfam" id="TIGR00493">
    <property type="entry name" value="clpP"/>
    <property type="match status" value="1"/>
</dbReference>
<dbReference type="NCBIfam" id="NF001368">
    <property type="entry name" value="PRK00277.1"/>
    <property type="match status" value="1"/>
</dbReference>
<dbReference type="NCBIfam" id="NF009205">
    <property type="entry name" value="PRK12553.1"/>
    <property type="match status" value="1"/>
</dbReference>
<dbReference type="PANTHER" id="PTHR10381">
    <property type="entry name" value="ATP-DEPENDENT CLP PROTEASE PROTEOLYTIC SUBUNIT"/>
    <property type="match status" value="1"/>
</dbReference>
<dbReference type="PANTHER" id="PTHR10381:SF70">
    <property type="entry name" value="ATP-DEPENDENT CLP PROTEASE PROTEOLYTIC SUBUNIT"/>
    <property type="match status" value="1"/>
</dbReference>
<dbReference type="Pfam" id="PF00574">
    <property type="entry name" value="CLP_protease"/>
    <property type="match status" value="1"/>
</dbReference>
<dbReference type="PRINTS" id="PR00127">
    <property type="entry name" value="CLPPROTEASEP"/>
</dbReference>
<dbReference type="SUPFAM" id="SSF52096">
    <property type="entry name" value="ClpP/crotonase"/>
    <property type="match status" value="1"/>
</dbReference>
<dbReference type="PROSITE" id="PS00382">
    <property type="entry name" value="CLP_PROTEASE_HIS"/>
    <property type="match status" value="1"/>
</dbReference>
<proteinExistence type="inferred from homology"/>
<feature type="chain" id="PRO_0000179513" description="ATP-dependent Clp protease proteolytic subunit">
    <location>
        <begin position="1"/>
        <end position="217"/>
    </location>
</feature>
<feature type="active site" description="Nucleophile" evidence="1">
    <location>
        <position position="119"/>
    </location>
</feature>
<feature type="active site" evidence="1">
    <location>
        <position position="144"/>
    </location>
</feature>
<evidence type="ECO:0000255" key="1">
    <source>
        <dbReference type="HAMAP-Rule" id="MF_00444"/>
    </source>
</evidence>
<keyword id="KW-0963">Cytoplasm</keyword>
<keyword id="KW-0378">Hydrolase</keyword>
<keyword id="KW-0645">Protease</keyword>
<keyword id="KW-1185">Reference proteome</keyword>
<keyword id="KW-0720">Serine protease</keyword>
<name>CLPP_BORPE</name>
<reference key="1">
    <citation type="journal article" date="2003" name="Nat. Genet.">
        <title>Comparative analysis of the genome sequences of Bordetella pertussis, Bordetella parapertussis and Bordetella bronchiseptica.</title>
        <authorList>
            <person name="Parkhill J."/>
            <person name="Sebaihia M."/>
            <person name="Preston A."/>
            <person name="Murphy L.D."/>
            <person name="Thomson N.R."/>
            <person name="Harris D.E."/>
            <person name="Holden M.T.G."/>
            <person name="Churcher C.M."/>
            <person name="Bentley S.D."/>
            <person name="Mungall K.L."/>
            <person name="Cerdeno-Tarraga A.-M."/>
            <person name="Temple L."/>
            <person name="James K.D."/>
            <person name="Harris B."/>
            <person name="Quail M.A."/>
            <person name="Achtman M."/>
            <person name="Atkin R."/>
            <person name="Baker S."/>
            <person name="Basham D."/>
            <person name="Bason N."/>
            <person name="Cherevach I."/>
            <person name="Chillingworth T."/>
            <person name="Collins M."/>
            <person name="Cronin A."/>
            <person name="Davis P."/>
            <person name="Doggett J."/>
            <person name="Feltwell T."/>
            <person name="Goble A."/>
            <person name="Hamlin N."/>
            <person name="Hauser H."/>
            <person name="Holroyd S."/>
            <person name="Jagels K."/>
            <person name="Leather S."/>
            <person name="Moule S."/>
            <person name="Norberczak H."/>
            <person name="O'Neil S."/>
            <person name="Ormond D."/>
            <person name="Price C."/>
            <person name="Rabbinowitsch E."/>
            <person name="Rutter S."/>
            <person name="Sanders M."/>
            <person name="Saunders D."/>
            <person name="Seeger K."/>
            <person name="Sharp S."/>
            <person name="Simmonds M."/>
            <person name="Skelton J."/>
            <person name="Squares R."/>
            <person name="Squares S."/>
            <person name="Stevens K."/>
            <person name="Unwin L."/>
            <person name="Whitehead S."/>
            <person name="Barrell B.G."/>
            <person name="Maskell D.J."/>
        </authorList>
    </citation>
    <scope>NUCLEOTIDE SEQUENCE [LARGE SCALE GENOMIC DNA]</scope>
    <source>
        <strain>Tohama I / ATCC BAA-589 / NCTC 13251</strain>
    </source>
</reference>
<gene>
    <name evidence="1" type="primary">clpP</name>
    <name type="ordered locus">BP1775</name>
</gene>
<accession>Q7VXI7</accession>
<organism>
    <name type="scientific">Bordetella pertussis (strain Tohama I / ATCC BAA-589 / NCTC 13251)</name>
    <dbReference type="NCBI Taxonomy" id="257313"/>
    <lineage>
        <taxon>Bacteria</taxon>
        <taxon>Pseudomonadati</taxon>
        <taxon>Pseudomonadota</taxon>
        <taxon>Betaproteobacteria</taxon>
        <taxon>Burkholderiales</taxon>
        <taxon>Alcaligenaceae</taxon>
        <taxon>Bordetella</taxon>
    </lineage>
</organism>
<protein>
    <recommendedName>
        <fullName evidence="1">ATP-dependent Clp protease proteolytic subunit</fullName>
        <ecNumber evidence="1">3.4.21.92</ecNumber>
    </recommendedName>
    <alternativeName>
        <fullName evidence="1">Endopeptidase Clp</fullName>
    </alternativeName>
</protein>
<comment type="function">
    <text evidence="1">Cleaves peptides in various proteins in a process that requires ATP hydrolysis. Has a chymotrypsin-like activity. Plays a major role in the degradation of misfolded proteins.</text>
</comment>
<comment type="catalytic activity">
    <reaction evidence="1">
        <text>Hydrolysis of proteins to small peptides in the presence of ATP and magnesium. alpha-casein is the usual test substrate. In the absence of ATP, only oligopeptides shorter than five residues are hydrolyzed (such as succinyl-Leu-Tyr-|-NHMec, and Leu-Tyr-Leu-|-Tyr-Trp, in which cleavage of the -Tyr-|-Leu- and -Tyr-|-Trp bonds also occurs).</text>
        <dbReference type="EC" id="3.4.21.92"/>
    </reaction>
</comment>
<comment type="subunit">
    <text evidence="1">Fourteen ClpP subunits assemble into 2 heptameric rings which stack back to back to give a disk-like structure with a central cavity, resembling the structure of eukaryotic proteasomes.</text>
</comment>
<comment type="subcellular location">
    <subcellularLocation>
        <location evidence="1">Cytoplasm</location>
    </subcellularLocation>
</comment>
<comment type="similarity">
    <text evidence="1">Belongs to the peptidase S14 family.</text>
</comment>